<gene>
    <name evidence="1" type="primary">rplO</name>
    <name type="ordered locus">SH0821</name>
</gene>
<accession>Q4L895</accession>
<reference key="1">
    <citation type="journal article" date="2005" name="J. Bacteriol.">
        <title>Whole-genome sequencing of Staphylococcus haemolyticus uncovers the extreme plasticity of its genome and the evolution of human-colonizing staphylococcal species.</title>
        <authorList>
            <person name="Takeuchi F."/>
            <person name="Watanabe S."/>
            <person name="Baba T."/>
            <person name="Yuzawa H."/>
            <person name="Ito T."/>
            <person name="Morimoto Y."/>
            <person name="Kuroda M."/>
            <person name="Cui L."/>
            <person name="Takahashi M."/>
            <person name="Ankai A."/>
            <person name="Baba S."/>
            <person name="Fukui S."/>
            <person name="Lee J.C."/>
            <person name="Hiramatsu K."/>
        </authorList>
    </citation>
    <scope>NUCLEOTIDE SEQUENCE [LARGE SCALE GENOMIC DNA]</scope>
    <source>
        <strain>JCSC1435</strain>
    </source>
</reference>
<organism>
    <name type="scientific">Staphylococcus haemolyticus (strain JCSC1435)</name>
    <dbReference type="NCBI Taxonomy" id="279808"/>
    <lineage>
        <taxon>Bacteria</taxon>
        <taxon>Bacillati</taxon>
        <taxon>Bacillota</taxon>
        <taxon>Bacilli</taxon>
        <taxon>Bacillales</taxon>
        <taxon>Staphylococcaceae</taxon>
        <taxon>Staphylococcus</taxon>
    </lineage>
</organism>
<name>RL15_STAHJ</name>
<keyword id="KW-0687">Ribonucleoprotein</keyword>
<keyword id="KW-0689">Ribosomal protein</keyword>
<keyword id="KW-0694">RNA-binding</keyword>
<keyword id="KW-0699">rRNA-binding</keyword>
<proteinExistence type="inferred from homology"/>
<evidence type="ECO:0000255" key="1">
    <source>
        <dbReference type="HAMAP-Rule" id="MF_01341"/>
    </source>
</evidence>
<evidence type="ECO:0000256" key="2">
    <source>
        <dbReference type="SAM" id="MobiDB-lite"/>
    </source>
</evidence>
<evidence type="ECO:0000305" key="3"/>
<dbReference type="EMBL" id="AP006716">
    <property type="protein sequence ID" value="BAE04130.1"/>
    <property type="molecule type" value="Genomic_DNA"/>
</dbReference>
<dbReference type="RefSeq" id="WP_011275139.1">
    <property type="nucleotide sequence ID" value="NC_007168.1"/>
</dbReference>
<dbReference type="SMR" id="Q4L895"/>
<dbReference type="GeneID" id="93780210"/>
<dbReference type="KEGG" id="sha:SH0821"/>
<dbReference type="eggNOG" id="COG0200">
    <property type="taxonomic scope" value="Bacteria"/>
</dbReference>
<dbReference type="HOGENOM" id="CLU_055188_4_2_9"/>
<dbReference type="OrthoDB" id="9810293at2"/>
<dbReference type="Proteomes" id="UP000000543">
    <property type="component" value="Chromosome"/>
</dbReference>
<dbReference type="GO" id="GO:0022625">
    <property type="term" value="C:cytosolic large ribosomal subunit"/>
    <property type="evidence" value="ECO:0007669"/>
    <property type="project" value="TreeGrafter"/>
</dbReference>
<dbReference type="GO" id="GO:0019843">
    <property type="term" value="F:rRNA binding"/>
    <property type="evidence" value="ECO:0007669"/>
    <property type="project" value="UniProtKB-UniRule"/>
</dbReference>
<dbReference type="GO" id="GO:0003735">
    <property type="term" value="F:structural constituent of ribosome"/>
    <property type="evidence" value="ECO:0007669"/>
    <property type="project" value="InterPro"/>
</dbReference>
<dbReference type="GO" id="GO:0006412">
    <property type="term" value="P:translation"/>
    <property type="evidence" value="ECO:0007669"/>
    <property type="project" value="UniProtKB-UniRule"/>
</dbReference>
<dbReference type="FunFam" id="3.100.10.10:FF:000004">
    <property type="entry name" value="50S ribosomal protein L15"/>
    <property type="match status" value="1"/>
</dbReference>
<dbReference type="Gene3D" id="3.100.10.10">
    <property type="match status" value="1"/>
</dbReference>
<dbReference type="HAMAP" id="MF_01341">
    <property type="entry name" value="Ribosomal_uL15"/>
    <property type="match status" value="1"/>
</dbReference>
<dbReference type="InterPro" id="IPR030878">
    <property type="entry name" value="Ribosomal_uL15"/>
</dbReference>
<dbReference type="InterPro" id="IPR021131">
    <property type="entry name" value="Ribosomal_uL15/eL18"/>
</dbReference>
<dbReference type="InterPro" id="IPR036227">
    <property type="entry name" value="Ribosomal_uL15/eL18_sf"/>
</dbReference>
<dbReference type="InterPro" id="IPR005749">
    <property type="entry name" value="Ribosomal_uL15_bac-type"/>
</dbReference>
<dbReference type="InterPro" id="IPR001196">
    <property type="entry name" value="Ribosomal_uL15_CS"/>
</dbReference>
<dbReference type="NCBIfam" id="TIGR01071">
    <property type="entry name" value="rplO_bact"/>
    <property type="match status" value="1"/>
</dbReference>
<dbReference type="PANTHER" id="PTHR12934">
    <property type="entry name" value="50S RIBOSOMAL PROTEIN L15"/>
    <property type="match status" value="1"/>
</dbReference>
<dbReference type="PANTHER" id="PTHR12934:SF11">
    <property type="entry name" value="LARGE RIBOSOMAL SUBUNIT PROTEIN UL15M"/>
    <property type="match status" value="1"/>
</dbReference>
<dbReference type="Pfam" id="PF00828">
    <property type="entry name" value="Ribosomal_L27A"/>
    <property type="match status" value="1"/>
</dbReference>
<dbReference type="SUPFAM" id="SSF52080">
    <property type="entry name" value="Ribosomal proteins L15p and L18e"/>
    <property type="match status" value="1"/>
</dbReference>
<dbReference type="PROSITE" id="PS00475">
    <property type="entry name" value="RIBOSOMAL_L15"/>
    <property type="match status" value="1"/>
</dbReference>
<sequence>MKLHELKAAEGSRRVRNRVGRGAGSGNGKTSGRGQKGQKARSGGGVRPGFEGGQLPLFRRLPKRGFTNINRKEYAIVNLDQLNKFEDGTEVTPALLVETGVVKNEKSGIKVLGNGSLDKKLTVKAHKFSASAVEAIDAKGGAHEVI</sequence>
<feature type="chain" id="PRO_0000104817" description="Large ribosomal subunit protein uL15">
    <location>
        <begin position="1"/>
        <end position="146"/>
    </location>
</feature>
<feature type="region of interest" description="Disordered" evidence="2">
    <location>
        <begin position="1"/>
        <end position="56"/>
    </location>
</feature>
<feature type="compositionally biased region" description="Basic and acidic residues" evidence="2">
    <location>
        <begin position="1"/>
        <end position="13"/>
    </location>
</feature>
<feature type="compositionally biased region" description="Gly residues" evidence="2">
    <location>
        <begin position="21"/>
        <end position="35"/>
    </location>
</feature>
<feature type="compositionally biased region" description="Gly residues" evidence="2">
    <location>
        <begin position="42"/>
        <end position="52"/>
    </location>
</feature>
<protein>
    <recommendedName>
        <fullName evidence="1">Large ribosomal subunit protein uL15</fullName>
    </recommendedName>
    <alternativeName>
        <fullName evidence="3">50S ribosomal protein L15</fullName>
    </alternativeName>
</protein>
<comment type="function">
    <text evidence="1">Binds to the 23S rRNA.</text>
</comment>
<comment type="subunit">
    <text evidence="1">Part of the 50S ribosomal subunit.</text>
</comment>
<comment type="similarity">
    <text evidence="1">Belongs to the universal ribosomal protein uL15 family.</text>
</comment>